<evidence type="ECO:0000250" key="1">
    <source>
        <dbReference type="UniProtKB" id="Q80TN5"/>
    </source>
</evidence>
<evidence type="ECO:0000250" key="2">
    <source>
        <dbReference type="UniProtKB" id="Q8IUH5"/>
    </source>
</evidence>
<evidence type="ECO:0000255" key="3"/>
<evidence type="ECO:0000255" key="4">
    <source>
        <dbReference type="PROSITE-ProRule" id="PRU00067"/>
    </source>
</evidence>
<evidence type="ECO:0000269" key="5">
    <source>
    </source>
</evidence>
<evidence type="ECO:0000269" key="6">
    <source>
    </source>
</evidence>
<evidence type="ECO:0000269" key="7">
    <source>
    </source>
</evidence>
<evidence type="ECO:0000303" key="8">
    <source>
    </source>
</evidence>
<evidence type="ECO:0000303" key="9">
    <source>
    </source>
</evidence>
<evidence type="ECO:0000305" key="10"/>
<evidence type="ECO:0000312" key="11">
    <source>
        <dbReference type="ZFIN" id="ZDB-GENE-070424-194"/>
    </source>
</evidence>
<keyword id="KW-0012">Acyltransferase</keyword>
<keyword id="KW-0040">ANK repeat</keyword>
<keyword id="KW-1003">Cell membrane</keyword>
<keyword id="KW-0966">Cell projection</keyword>
<keyword id="KW-0968">Cytoplasmic vesicle</keyword>
<keyword id="KW-0333">Golgi apparatus</keyword>
<keyword id="KW-0449">Lipoprotein</keyword>
<keyword id="KW-0472">Membrane</keyword>
<keyword id="KW-0564">Palmitate</keyword>
<keyword id="KW-1185">Reference proteome</keyword>
<keyword id="KW-0677">Repeat</keyword>
<keyword id="KW-0770">Synapse</keyword>
<keyword id="KW-0808">Transferase</keyword>
<keyword id="KW-0812">Transmembrane</keyword>
<keyword id="KW-1133">Transmembrane helix</keyword>
<accession>A5WVX9</accession>
<feature type="chain" id="PRO_0000451101" description="Palmitoyltransferase ZDHHC17">
    <location>
        <begin position="1"/>
        <end position="620"/>
    </location>
</feature>
<feature type="topological domain" description="Cytoplasmic" evidence="10">
    <location>
        <begin position="1"/>
        <end position="292"/>
    </location>
</feature>
<feature type="transmembrane region" description="Helical" evidence="3">
    <location>
        <begin position="293"/>
        <end position="313"/>
    </location>
</feature>
<feature type="transmembrane region" description="Helical" evidence="3">
    <location>
        <begin position="314"/>
        <end position="334"/>
    </location>
</feature>
<feature type="topological domain" description="Cytoplasmic" evidence="10">
    <location>
        <begin position="335"/>
        <end position="345"/>
    </location>
</feature>
<feature type="transmembrane region" description="Helical" evidence="3">
    <location>
        <begin position="346"/>
        <end position="366"/>
    </location>
</feature>
<feature type="topological domain" description="Lumenal" evidence="10">
    <location>
        <begin position="367"/>
        <end position="369"/>
    </location>
</feature>
<feature type="transmembrane region" description="Helical" evidence="3">
    <location>
        <begin position="370"/>
        <end position="390"/>
    </location>
</feature>
<feature type="topological domain" description="Cytoplasmic" evidence="10">
    <location>
        <begin position="391"/>
        <end position="469"/>
    </location>
</feature>
<feature type="transmembrane region" description="Helical" evidence="3">
    <location>
        <begin position="470"/>
        <end position="490"/>
    </location>
</feature>
<feature type="topological domain" description="Lumenal" evidence="10">
    <location>
        <begin position="491"/>
        <end position="504"/>
    </location>
</feature>
<feature type="transmembrane region" description="Helical" evidence="3">
    <location>
        <begin position="505"/>
        <end position="524"/>
    </location>
</feature>
<feature type="topological domain" description="Cytoplasmic" evidence="10">
    <location>
        <begin position="525"/>
        <end position="620"/>
    </location>
</feature>
<feature type="repeat" description="ANK 1" evidence="3">
    <location>
        <begin position="77"/>
        <end position="106"/>
    </location>
</feature>
<feature type="repeat" description="ANK 2" evidence="3">
    <location>
        <begin position="111"/>
        <end position="140"/>
    </location>
</feature>
<feature type="repeat" description="ANK 3" evidence="3">
    <location>
        <begin position="144"/>
        <end position="173"/>
    </location>
</feature>
<feature type="repeat" description="ANK 4" evidence="3">
    <location>
        <begin position="177"/>
        <end position="207"/>
    </location>
</feature>
<feature type="repeat" description="ANK 5" evidence="3">
    <location>
        <begin position="212"/>
        <end position="241"/>
    </location>
</feature>
<feature type="repeat" description="ANK 6" evidence="3">
    <location>
        <begin position="245"/>
        <end position="274"/>
    </location>
</feature>
<feature type="domain" description="DHHC" evidence="4">
    <location>
        <begin position="425"/>
        <end position="475"/>
    </location>
</feature>
<feature type="active site" description="S-palmitoyl cysteine intermediate" evidence="2 4">
    <location>
        <position position="455"/>
    </location>
</feature>
<reference key="1">
    <citation type="journal article" date="2013" name="Nature">
        <title>The zebrafish reference genome sequence and its relationship to the human genome.</title>
        <authorList>
            <person name="Howe K."/>
            <person name="Clark M.D."/>
            <person name="Torroja C.F."/>
            <person name="Torrance J."/>
            <person name="Berthelot C."/>
            <person name="Muffato M."/>
            <person name="Collins J.E."/>
            <person name="Humphray S."/>
            <person name="McLaren K."/>
            <person name="Matthews L."/>
            <person name="McLaren S."/>
            <person name="Sealy I."/>
            <person name="Caccamo M."/>
            <person name="Churcher C."/>
            <person name="Scott C."/>
            <person name="Barrett J.C."/>
            <person name="Koch R."/>
            <person name="Rauch G.J."/>
            <person name="White S."/>
            <person name="Chow W."/>
            <person name="Kilian B."/>
            <person name="Quintais L.T."/>
            <person name="Guerra-Assuncao J.A."/>
            <person name="Zhou Y."/>
            <person name="Gu Y."/>
            <person name="Yen J."/>
            <person name="Vogel J.H."/>
            <person name="Eyre T."/>
            <person name="Redmond S."/>
            <person name="Banerjee R."/>
            <person name="Chi J."/>
            <person name="Fu B."/>
            <person name="Langley E."/>
            <person name="Maguire S.F."/>
            <person name="Laird G.K."/>
            <person name="Lloyd D."/>
            <person name="Kenyon E."/>
            <person name="Donaldson S."/>
            <person name="Sehra H."/>
            <person name="Almeida-King J."/>
            <person name="Loveland J."/>
            <person name="Trevanion S."/>
            <person name="Jones M."/>
            <person name="Quail M."/>
            <person name="Willey D."/>
            <person name="Hunt A."/>
            <person name="Burton J."/>
            <person name="Sims S."/>
            <person name="McLay K."/>
            <person name="Plumb B."/>
            <person name="Davis J."/>
            <person name="Clee C."/>
            <person name="Oliver K."/>
            <person name="Clark R."/>
            <person name="Riddle C."/>
            <person name="Elliot D."/>
            <person name="Threadgold G."/>
            <person name="Harden G."/>
            <person name="Ware D."/>
            <person name="Begum S."/>
            <person name="Mortimore B."/>
            <person name="Kerry G."/>
            <person name="Heath P."/>
            <person name="Phillimore B."/>
            <person name="Tracey A."/>
            <person name="Corby N."/>
            <person name="Dunn M."/>
            <person name="Johnson C."/>
            <person name="Wood J."/>
            <person name="Clark S."/>
            <person name="Pelan S."/>
            <person name="Griffiths G."/>
            <person name="Smith M."/>
            <person name="Glithero R."/>
            <person name="Howden P."/>
            <person name="Barker N."/>
            <person name="Lloyd C."/>
            <person name="Stevens C."/>
            <person name="Harley J."/>
            <person name="Holt K."/>
            <person name="Panagiotidis G."/>
            <person name="Lovell J."/>
            <person name="Beasley H."/>
            <person name="Henderson C."/>
            <person name="Gordon D."/>
            <person name="Auger K."/>
            <person name="Wright D."/>
            <person name="Collins J."/>
            <person name="Raisen C."/>
            <person name="Dyer L."/>
            <person name="Leung K."/>
            <person name="Robertson L."/>
            <person name="Ambridge K."/>
            <person name="Leongamornlert D."/>
            <person name="McGuire S."/>
            <person name="Gilderthorp R."/>
            <person name="Griffiths C."/>
            <person name="Manthravadi D."/>
            <person name="Nichol S."/>
            <person name="Barker G."/>
            <person name="Whitehead S."/>
            <person name="Kay M."/>
            <person name="Brown J."/>
            <person name="Murnane C."/>
            <person name="Gray E."/>
            <person name="Humphries M."/>
            <person name="Sycamore N."/>
            <person name="Barker D."/>
            <person name="Saunders D."/>
            <person name="Wallis J."/>
            <person name="Babbage A."/>
            <person name="Hammond S."/>
            <person name="Mashreghi-Mohammadi M."/>
            <person name="Barr L."/>
            <person name="Martin S."/>
            <person name="Wray P."/>
            <person name="Ellington A."/>
            <person name="Matthews N."/>
            <person name="Ellwood M."/>
            <person name="Woodmansey R."/>
            <person name="Clark G."/>
            <person name="Cooper J."/>
            <person name="Tromans A."/>
            <person name="Grafham D."/>
            <person name="Skuce C."/>
            <person name="Pandian R."/>
            <person name="Andrews R."/>
            <person name="Harrison E."/>
            <person name="Kimberley A."/>
            <person name="Garnett J."/>
            <person name="Fosker N."/>
            <person name="Hall R."/>
            <person name="Garner P."/>
            <person name="Kelly D."/>
            <person name="Bird C."/>
            <person name="Palmer S."/>
            <person name="Gehring I."/>
            <person name="Berger A."/>
            <person name="Dooley C.M."/>
            <person name="Ersan-Urun Z."/>
            <person name="Eser C."/>
            <person name="Geiger H."/>
            <person name="Geisler M."/>
            <person name="Karotki L."/>
            <person name="Kirn A."/>
            <person name="Konantz J."/>
            <person name="Konantz M."/>
            <person name="Oberlander M."/>
            <person name="Rudolph-Geiger S."/>
            <person name="Teucke M."/>
            <person name="Lanz C."/>
            <person name="Raddatz G."/>
            <person name="Osoegawa K."/>
            <person name="Zhu B."/>
            <person name="Rapp A."/>
            <person name="Widaa S."/>
            <person name="Langford C."/>
            <person name="Yang F."/>
            <person name="Schuster S.C."/>
            <person name="Carter N.P."/>
            <person name="Harrow J."/>
            <person name="Ning Z."/>
            <person name="Herrero J."/>
            <person name="Searle S.M."/>
            <person name="Enright A."/>
            <person name="Geisler R."/>
            <person name="Plasterk R.H."/>
            <person name="Lee C."/>
            <person name="Westerfield M."/>
            <person name="de Jong P.J."/>
            <person name="Zon L.I."/>
            <person name="Postlethwait J.H."/>
            <person name="Nusslein-Volhard C."/>
            <person name="Hubbard T.J."/>
            <person name="Roest Crollius H."/>
            <person name="Rogers J."/>
            <person name="Stemple D.L."/>
        </authorList>
    </citation>
    <scope>NUCLEOTIDE SEQUENCE [LARGE SCALE GENOMIC DNA]</scope>
    <source>
        <strain>Tuebingen</strain>
    </source>
</reference>
<reference key="2">
    <citation type="journal article" date="2015" name="Mol. Cell. Neurosci.">
        <title>ZDHHC17 promotes axon outgrowth by regulating TrkA-tubulin complex formation.</title>
        <authorList>
            <person name="Shi W."/>
            <person name="Wang F."/>
            <person name="Gao M."/>
            <person name="Yang Y."/>
            <person name="Du Z."/>
            <person name="Wang C."/>
            <person name="Yao Y."/>
            <person name="He K."/>
            <person name="Chen X."/>
            <person name="Hao A."/>
        </authorList>
    </citation>
    <scope>FUNCTION</scope>
    <scope>DEVELOPMENTAL STAGE</scope>
    <scope>DISRUPTION PHENOTYPE</scope>
</reference>
<reference key="3">
    <citation type="journal article" date="2015" name="Neurotoxicol. Teratol.">
        <title>2-Bromopalmitate impairs neural stem/progenitor cell proliferation, promotes cell apoptosis and induces malformation in zebrafish embryonic brain.</title>
        <authorList>
            <person name="Wang C."/>
            <person name="Chen X."/>
            <person name="Shi W."/>
            <person name="Wang F."/>
            <person name="Du Z."/>
            <person name="Li X."/>
            <person name="Yao Y."/>
            <person name="Liu T."/>
            <person name="Shao T."/>
            <person name="Li G."/>
            <person name="Hao A."/>
        </authorList>
    </citation>
    <scope>DEVELOPMENTAL STAGE</scope>
</reference>
<reference key="4">
    <citation type="journal article" date="2016" name="Biochem. Biophys. Res. Commun.">
        <title>Protein palmitoylation activate zygotic gene expression during the maternal-to-zygotic transition.</title>
        <authorList>
            <person name="Du Z."/>
            <person name="Chen X."/>
            <person name="Li X."/>
            <person name="He K."/>
            <person name="Ji S."/>
            <person name="Shi W."/>
            <person name="Hao A."/>
        </authorList>
    </citation>
    <scope>DEVELOPMENTAL STAGE</scope>
</reference>
<dbReference type="EC" id="2.3.1.225" evidence="2"/>
<dbReference type="EC" id="2.3.1.-" evidence="1"/>
<dbReference type="EMBL" id="CT573050">
    <property type="status" value="NOT_ANNOTATED_CDS"/>
    <property type="molecule type" value="Genomic_DNA"/>
</dbReference>
<dbReference type="RefSeq" id="NP_001121854.1">
    <property type="nucleotide sequence ID" value="NM_001128382.1"/>
</dbReference>
<dbReference type="SMR" id="A5WVX9"/>
<dbReference type="FunCoup" id="A5WVX9">
    <property type="interactions" value="2149"/>
</dbReference>
<dbReference type="STRING" id="7955.ENSDARP00000094148"/>
<dbReference type="PaxDb" id="7955-ENSDARP00000094148"/>
<dbReference type="PeptideAtlas" id="A5WVX9"/>
<dbReference type="Ensembl" id="ENSDART00000103371">
    <property type="protein sequence ID" value="ENSDARP00000094148"/>
    <property type="gene ID" value="ENSDARG00000070441"/>
</dbReference>
<dbReference type="GeneID" id="100148543"/>
<dbReference type="KEGG" id="dre:100148543"/>
<dbReference type="AGR" id="ZFIN:ZDB-GENE-070424-194"/>
<dbReference type="CTD" id="23390"/>
<dbReference type="ZFIN" id="ZDB-GENE-070424-194">
    <property type="gene designation" value="zdhhc17"/>
</dbReference>
<dbReference type="eggNOG" id="KOG0509">
    <property type="taxonomic scope" value="Eukaryota"/>
</dbReference>
<dbReference type="HOGENOM" id="CLU_012510_3_1_1"/>
<dbReference type="InParanoid" id="A5WVX9"/>
<dbReference type="OMA" id="FWVGFRY"/>
<dbReference type="OrthoDB" id="6781668at2759"/>
<dbReference type="PhylomeDB" id="A5WVX9"/>
<dbReference type="TreeFam" id="TF317342"/>
<dbReference type="PRO" id="PR:A5WVX9"/>
<dbReference type="Proteomes" id="UP000000437">
    <property type="component" value="Chromosome 4"/>
</dbReference>
<dbReference type="Bgee" id="ENSDARG00000070441">
    <property type="expression patterns" value="Expressed in mature ovarian follicle and 21 other cell types or tissues"/>
</dbReference>
<dbReference type="GO" id="GO:0042995">
    <property type="term" value="C:cell projection"/>
    <property type="evidence" value="ECO:0007669"/>
    <property type="project" value="UniProtKB-KW"/>
</dbReference>
<dbReference type="GO" id="GO:0030659">
    <property type="term" value="C:cytoplasmic vesicle membrane"/>
    <property type="evidence" value="ECO:0007669"/>
    <property type="project" value="UniProtKB-SubCell"/>
</dbReference>
<dbReference type="GO" id="GO:0000139">
    <property type="term" value="C:Golgi membrane"/>
    <property type="evidence" value="ECO:0007669"/>
    <property type="project" value="UniProtKB-SubCell"/>
</dbReference>
<dbReference type="GO" id="GO:0042734">
    <property type="term" value="C:presynaptic membrane"/>
    <property type="evidence" value="ECO:0007669"/>
    <property type="project" value="UniProtKB-SubCell"/>
</dbReference>
<dbReference type="GO" id="GO:0019705">
    <property type="term" value="F:protein-cysteine S-myristoyltransferase activity"/>
    <property type="evidence" value="ECO:0007669"/>
    <property type="project" value="RHEA"/>
</dbReference>
<dbReference type="GO" id="GO:0019706">
    <property type="term" value="F:protein-cysteine S-palmitoyltransferase activity"/>
    <property type="evidence" value="ECO:0000250"/>
    <property type="project" value="UniProtKB"/>
</dbReference>
<dbReference type="GO" id="GO:0140439">
    <property type="term" value="F:protein-cysteine S-stearoyltransferase activity"/>
    <property type="evidence" value="ECO:0007669"/>
    <property type="project" value="RHEA"/>
</dbReference>
<dbReference type="GO" id="GO:0007409">
    <property type="term" value="P:axonogenesis"/>
    <property type="evidence" value="ECO:0000315"/>
    <property type="project" value="ZFIN"/>
</dbReference>
<dbReference type="GO" id="GO:0046959">
    <property type="term" value="P:habituation"/>
    <property type="evidence" value="ECO:0000315"/>
    <property type="project" value="ZFIN"/>
</dbReference>
<dbReference type="GO" id="GO:0070372">
    <property type="term" value="P:regulation of ERK1 and ERK2 cascade"/>
    <property type="evidence" value="ECO:0000250"/>
    <property type="project" value="UniProtKB"/>
</dbReference>
<dbReference type="GO" id="GO:0051386">
    <property type="term" value="P:regulation of neurotrophin TRK receptor signaling pathway"/>
    <property type="evidence" value="ECO:0000250"/>
    <property type="project" value="UniProtKB"/>
</dbReference>
<dbReference type="FunFam" id="1.25.40.20:FF:000035">
    <property type="entry name" value="Palmitoyltransferase"/>
    <property type="match status" value="1"/>
</dbReference>
<dbReference type="Gene3D" id="1.25.40.20">
    <property type="entry name" value="Ankyrin repeat-containing domain"/>
    <property type="match status" value="1"/>
</dbReference>
<dbReference type="InterPro" id="IPR002110">
    <property type="entry name" value="Ankyrin_rpt"/>
</dbReference>
<dbReference type="InterPro" id="IPR036770">
    <property type="entry name" value="Ankyrin_rpt-contain_sf"/>
</dbReference>
<dbReference type="InterPro" id="IPR001594">
    <property type="entry name" value="Palmitoyltrfase_DHHC"/>
</dbReference>
<dbReference type="PANTHER" id="PTHR24161">
    <property type="entry name" value="ANK_REP_REGION DOMAIN-CONTAINING PROTEIN-RELATED"/>
    <property type="match status" value="1"/>
</dbReference>
<dbReference type="PANTHER" id="PTHR24161:SF18">
    <property type="entry name" value="PALMITOYLTRANSFERASE ZDHHC17"/>
    <property type="match status" value="1"/>
</dbReference>
<dbReference type="Pfam" id="PF12796">
    <property type="entry name" value="Ank_2"/>
    <property type="match status" value="2"/>
</dbReference>
<dbReference type="Pfam" id="PF01529">
    <property type="entry name" value="DHHC"/>
    <property type="match status" value="1"/>
</dbReference>
<dbReference type="SMART" id="SM00248">
    <property type="entry name" value="ANK"/>
    <property type="match status" value="6"/>
</dbReference>
<dbReference type="SUPFAM" id="SSF48403">
    <property type="entry name" value="Ankyrin repeat"/>
    <property type="match status" value="1"/>
</dbReference>
<dbReference type="PROSITE" id="PS50297">
    <property type="entry name" value="ANK_REP_REGION"/>
    <property type="match status" value="1"/>
</dbReference>
<dbReference type="PROSITE" id="PS50088">
    <property type="entry name" value="ANK_REPEAT"/>
    <property type="match status" value="5"/>
</dbReference>
<dbReference type="PROSITE" id="PS50216">
    <property type="entry name" value="DHHC"/>
    <property type="match status" value="1"/>
</dbReference>
<protein>
    <recommendedName>
        <fullName evidence="10">Palmitoyltransferase ZDHHC17</fullName>
        <ecNumber evidence="2">2.3.1.225</ecNumber>
    </recommendedName>
    <alternativeName>
        <fullName evidence="1">Acyltransferase ZDHHC17</fullName>
        <ecNumber evidence="1">2.3.1.-</ecNumber>
    </alternativeName>
    <alternativeName>
        <fullName evidence="8">DHHC domain-containing cysteine-rich protein 17</fullName>
    </alternativeName>
    <alternativeName>
        <fullName evidence="9">Zinc finger DHHC domain-containing protein 17</fullName>
    </alternativeName>
</protein>
<gene>
    <name evidence="9 11" type="primary">zdhhc17</name>
    <name evidence="8" type="synonym">dhhc17</name>
</gene>
<proteinExistence type="evidence at transcript level"/>
<organism>
    <name type="scientific">Danio rerio</name>
    <name type="common">Zebrafish</name>
    <name type="synonym">Brachydanio rerio</name>
    <dbReference type="NCBI Taxonomy" id="7955"/>
    <lineage>
        <taxon>Eukaryota</taxon>
        <taxon>Metazoa</taxon>
        <taxon>Chordata</taxon>
        <taxon>Craniata</taxon>
        <taxon>Vertebrata</taxon>
        <taxon>Euteleostomi</taxon>
        <taxon>Actinopterygii</taxon>
        <taxon>Neopterygii</taxon>
        <taxon>Teleostei</taxon>
        <taxon>Ostariophysi</taxon>
        <taxon>Cypriniformes</taxon>
        <taxon>Danionidae</taxon>
        <taxon>Danioninae</taxon>
        <taxon>Danio</taxon>
    </lineage>
</organism>
<comment type="function">
    <text evidence="1 2 6">Palmitoyltransferase that catalyzes the addition of palmitate onto various protein substrates and is involved in a variety of cellular processes. Has no stringent fatty acid selectivity and in addition to palmitate can also transfer onto target proteins myristate from tetradecanoyl-CoA and stearate from octadecanoyl-CoA (By similarity). Plays a role in axonogenesis (PubMed:26232532).</text>
</comment>
<comment type="catalytic activity">
    <reaction evidence="2">
        <text>L-cysteinyl-[protein] + hexadecanoyl-CoA = S-hexadecanoyl-L-cysteinyl-[protein] + CoA</text>
        <dbReference type="Rhea" id="RHEA:36683"/>
        <dbReference type="Rhea" id="RHEA-COMP:10131"/>
        <dbReference type="Rhea" id="RHEA-COMP:11032"/>
        <dbReference type="ChEBI" id="CHEBI:29950"/>
        <dbReference type="ChEBI" id="CHEBI:57287"/>
        <dbReference type="ChEBI" id="CHEBI:57379"/>
        <dbReference type="ChEBI" id="CHEBI:74151"/>
        <dbReference type="EC" id="2.3.1.225"/>
    </reaction>
</comment>
<comment type="catalytic activity">
    <reaction evidence="1">
        <text>L-cysteinyl-[protein] + tetradecanoyl-CoA = S-tetradecanoyl-L-cysteinyl-[protein] + CoA</text>
        <dbReference type="Rhea" id="RHEA:59736"/>
        <dbReference type="Rhea" id="RHEA-COMP:10131"/>
        <dbReference type="Rhea" id="RHEA-COMP:15433"/>
        <dbReference type="ChEBI" id="CHEBI:29950"/>
        <dbReference type="ChEBI" id="CHEBI:57287"/>
        <dbReference type="ChEBI" id="CHEBI:57385"/>
        <dbReference type="ChEBI" id="CHEBI:143199"/>
    </reaction>
    <physiologicalReaction direction="left-to-right" evidence="1">
        <dbReference type="Rhea" id="RHEA:59737"/>
    </physiologicalReaction>
</comment>
<comment type="catalytic activity">
    <reaction evidence="1">
        <text>L-cysteinyl-[protein] + octadecanoyl-CoA = S-octadecanoyl-L-cysteinyl-[protein] + CoA</text>
        <dbReference type="Rhea" id="RHEA:59740"/>
        <dbReference type="Rhea" id="RHEA-COMP:10131"/>
        <dbReference type="Rhea" id="RHEA-COMP:15434"/>
        <dbReference type="ChEBI" id="CHEBI:29950"/>
        <dbReference type="ChEBI" id="CHEBI:57287"/>
        <dbReference type="ChEBI" id="CHEBI:57394"/>
        <dbReference type="ChEBI" id="CHEBI:143200"/>
    </reaction>
    <physiologicalReaction direction="left-to-right" evidence="1">
        <dbReference type="Rhea" id="RHEA:59741"/>
    </physiologicalReaction>
</comment>
<comment type="subcellular location">
    <subcellularLocation>
        <location evidence="2">Golgi apparatus membrane</location>
        <topology evidence="3">Multi-pass membrane protein</topology>
    </subcellularLocation>
    <subcellularLocation>
        <location evidence="2">Cytoplasmic vesicle membrane</location>
        <topology evidence="3">Multi-pass membrane protein</topology>
    </subcellularLocation>
    <subcellularLocation>
        <location evidence="2">Presynaptic cell membrane</location>
        <topology evidence="3">Multi-pass membrane protein</topology>
    </subcellularLocation>
</comment>
<comment type="developmental stage">
    <text evidence="5 6 7">Probably maternally supplied, the zygotic expression becomes significant at 2.75 hpf and then decreases after 18 hpf but is still detected at 24 hpf (PubMed:26056731, PubMed:27235108). Highly expressed in the developing central nervous system from the presumptive telencephalon to the caudal tip of the spinal cord (PubMed:26232532).</text>
</comment>
<comment type="domain">
    <text evidence="2">The DHHC domain is required for palmitoyltransferase activity.</text>
</comment>
<comment type="PTM">
    <text evidence="2">Autopalmitoylated.</text>
</comment>
<comment type="disruption phenotype">
    <text evidence="6">Morpholino knockdown of the protein does not apparently affect embryo development (PubMed:26232532). However, the motility of morphants is markedly reduced from 3 days post-fertilization onwards (PubMed:26232532). This is associated with a significant defect in the axonal outgrowth of spinal motor neurons without affecting neuron generation (PubMed:26232532).</text>
</comment>
<comment type="similarity">
    <text evidence="10">Belongs to the DHHC palmitoyltransferase family. AKR/ZDHHC17 subfamily.</text>
</comment>
<sequence>MADALVGYEKEAGCVPILHPEEIKPQSHYNHGYNESRKSHVDDYSTWDIVKATQYGIFERCRELVEAGYDVRQPDKENVTLLHWAAINNRVDLVKYYISKGAIVDQLGGDLNSTPLHWATRQGHLSMVVQLMKYGADPSLIDGEGCSCVHLAAQFGHTSIVAYLIAKGQDVDMMDQNGMTPLMWAAYRTHSVDPTRLLLTFNVSVNLGDKYHKNTALHWAVLAGNTTVISLLLEANANVDAQNIKGETPLDLAKQRKNVWMINHLQEARQAKGYDSPSYLKRLKMDKEFRQKVMLGTPFLVIWLVGFIADLDIDSWLIKGVMYAVMWLVVQFLSKSFFDHSMHSALPLGIYLATKFWMYITWFYWFWNDLPFVTIHLPFLLNSLALFYNFGKSWKSDPGIIKASEEQKKKTIVELAETGSLDLSIFCSTCLIRKPIRSKHCAVCNRCIAKFDHHCPWVGNCVGSGNHRYFMGYLFFLLCMICWMMYGCICYWRIHCATSYTKDGFWIYITQIATCSPWMFWMFLNSVFHFMWVAVLIMCQLYQIAVLGITTNERMNARRYKHFKVTATSIESPFNHGCMRNLIDFFELRCCGLLRPVPIDWTSQYTIEYDQTSGSGYQLV</sequence>
<name>ZDH17_DANRE</name>